<accession>P0DPM6</accession>
<accession>A0A385XJ57</accession>
<sequence length="14" mass="1690">MIIKTLKMSARKRN</sequence>
<protein>
    <recommendedName>
        <fullName evidence="2">Protein YacM</fullName>
    </recommendedName>
</protein>
<feature type="chain" id="PRO_0000445154" description="Protein YacM">
    <location>
        <begin position="1"/>
        <end position="14"/>
    </location>
</feature>
<organism>
    <name type="scientific">Escherichia coli (strain K12)</name>
    <dbReference type="NCBI Taxonomy" id="83333"/>
    <lineage>
        <taxon>Bacteria</taxon>
        <taxon>Pseudomonadati</taxon>
        <taxon>Pseudomonadota</taxon>
        <taxon>Gammaproteobacteria</taxon>
        <taxon>Enterobacterales</taxon>
        <taxon>Enterobacteriaceae</taxon>
        <taxon>Escherichia</taxon>
    </lineage>
</organism>
<gene>
    <name evidence="2" type="primary">yacM</name>
    <name type="ordered locus">b4727</name>
</gene>
<dbReference type="EMBL" id="U00096">
    <property type="protein sequence ID" value="AYC08165.1"/>
    <property type="molecule type" value="Genomic_DNA"/>
</dbReference>
<dbReference type="EnsemblBacteria" id="AYC08165">
    <property type="protein sequence ID" value="AYC08165"/>
    <property type="gene ID" value="b4727"/>
</dbReference>
<dbReference type="InParanoid" id="P0DPM6"/>
<dbReference type="BioCyc" id="EcoCyc:MONOMER0-4404"/>
<dbReference type="PRO" id="PR:P0DPM6"/>
<dbReference type="Proteomes" id="UP000000625">
    <property type="component" value="Chromosome"/>
</dbReference>
<evidence type="ECO:0000269" key="1">
    <source>
    </source>
</evidence>
<evidence type="ECO:0000303" key="2">
    <source>
    </source>
</evidence>
<proteinExistence type="evidence at protein level"/>
<name>YACM_ECOLI</name>
<keyword id="KW-1185">Reference proteome</keyword>
<reference key="1">
    <citation type="journal article" date="1997" name="Science">
        <title>The complete genome sequence of Escherichia coli K-12.</title>
        <authorList>
            <person name="Blattner F.R."/>
            <person name="Plunkett G. III"/>
            <person name="Bloch C.A."/>
            <person name="Perna N.T."/>
            <person name="Burland V."/>
            <person name="Riley M."/>
            <person name="Collado-Vides J."/>
            <person name="Glasner J.D."/>
            <person name="Rode C.K."/>
            <person name="Mayhew G.F."/>
            <person name="Gregor J."/>
            <person name="Davis N.W."/>
            <person name="Kirkpatrick H.A."/>
            <person name="Goeden M.A."/>
            <person name="Rose D.J."/>
            <person name="Mau B."/>
            <person name="Shao Y."/>
        </authorList>
    </citation>
    <scope>NUCLEOTIDE SEQUENCE [LARGE SCALE GENOMIC DNA]</scope>
    <source>
        <strain>K12 / MG1655 / ATCC 47076</strain>
    </source>
</reference>
<reference key="2">
    <citation type="journal article" date="2018" name="Proteomics">
        <title>Identifying new small proteins in Escherichia coli.</title>
        <authorList>
            <person name="VanOrsdel C.E."/>
            <person name="Kelly J.P."/>
            <person name="Burke B.N."/>
            <person name="Lein C.D."/>
            <person name="Oufiero C.E."/>
            <person name="Sanchez J.F."/>
            <person name="Wimmers L.E."/>
            <person name="Hearn D.J."/>
            <person name="Abuikhdair F.J."/>
            <person name="Barnhart K.R."/>
            <person name="Duley M.L."/>
            <person name="Ernst S.E.G."/>
            <person name="Kenerson B.A."/>
            <person name="Serafin A.J."/>
            <person name="Hemm M.R."/>
        </authorList>
    </citation>
    <scope>IDENTIFICATION</scope>
    <scope>INDUCTION</scope>
</reference>
<comment type="induction">
    <text evidence="1">Expressed in both exponential and stationary phase; expression is considerably higher during stationary phase (at protein level).</text>
</comment>